<proteinExistence type="evidence at protein level"/>
<accession>D4H6M0</accession>
<keyword id="KW-0328">Glycosyltransferase</keyword>
<keyword id="KW-1185">Reference proteome</keyword>
<keyword id="KW-0808">Transferase</keyword>
<name>SUS_DENA2</name>
<reference key="1">
    <citation type="journal article" date="2010" name="Stand. Genomic Sci.">
        <title>Complete genome sequence of Denitrovibrio acetiphilus type strain (N2460).</title>
        <authorList>
            <person name="Kiss H."/>
            <person name="Lang E."/>
            <person name="Lapidus A."/>
            <person name="Copeland A."/>
            <person name="Nolan M."/>
            <person name="Glavina Del Rio T."/>
            <person name="Chen F."/>
            <person name="Lucas S."/>
            <person name="Tice H."/>
            <person name="Cheng J.F."/>
            <person name="Han C."/>
            <person name="Goodwin L."/>
            <person name="Pitluck S."/>
            <person name="Liolios K."/>
            <person name="Pati A."/>
            <person name="Ivanova N."/>
            <person name="Mavromatis K."/>
            <person name="Chen A."/>
            <person name="Palaniappan K."/>
            <person name="Land M."/>
            <person name="Hauser L."/>
            <person name="Chang Y.J."/>
            <person name="Jeffries C.D."/>
            <person name="Detter J.C."/>
            <person name="Brettin T."/>
            <person name="Spring S."/>
            <person name="Rohde M."/>
            <person name="Goker M."/>
            <person name="Woyke T."/>
            <person name="Bristow J."/>
            <person name="Eisen J.A."/>
            <person name="Markowitz V."/>
            <person name="Hugenholtz P."/>
            <person name="Kyrpides N.C."/>
            <person name="Klenk H.P."/>
        </authorList>
    </citation>
    <scope>NUCLEOTIDE SEQUENCE [LARGE SCALE GENOMIC DNA]</scope>
    <source>
        <strain>DSM 12809 / NBRC 114555 / N2460</strain>
    </source>
</reference>
<reference key="2">
    <citation type="journal article" date="2015" name="Appl. Microbiol. Biotechnol.">
        <title>Identification of sucrose synthase in nonphotosynthetic bacteria and characterization of the recombinant enzymes.</title>
        <authorList>
            <person name="Diricks M."/>
            <person name="De Bruyn F."/>
            <person name="Van Daele P."/>
            <person name="Walmagh M."/>
            <person name="Desmet T."/>
        </authorList>
    </citation>
    <scope>FUNCTION</scope>
    <scope>CATALYTIC ACTIVITY</scope>
    <scope>BIOPHYSICOCHEMICAL PROPERTIES</scope>
    <source>
        <strain>DSM 12809 / NBRC 114555 / N2460</strain>
    </source>
</reference>
<organism>
    <name type="scientific">Denitrovibrio acetiphilus (strain DSM 12809 / NBRC 114555 / N2460)</name>
    <dbReference type="NCBI Taxonomy" id="522772"/>
    <lineage>
        <taxon>Bacteria</taxon>
        <taxon>Pseudomonadati</taxon>
        <taxon>Deferribacterota</taxon>
        <taxon>Deferribacteres</taxon>
        <taxon>Deferribacterales</taxon>
        <taxon>Geovibrionaceae</taxon>
        <taxon>Denitrovibrio</taxon>
    </lineage>
</organism>
<sequence length="786" mass="89796">MNLSNKELEGLDEIISDHREDFCPFLGRIEEEDKQFFLSSEMKEMYAGDTVPDFIASLQEAVKMPGQIYFATRASIGEWAFVTVFTDTLDYMEVSPTEYQEAKEKTVLGENAAWMPSVDLKPFNRDFPKPSSADFIGKGVEFLNRHQSSRIFMNPEKGLKQLLDFLRVHKYDGRQLMLNNRIDSVDKLKKALKKAQALLKNKSDETEWEEVESDMAHLGFEPGWGKKLGYVKEFLALLSDILAAPEPVVLEKFLDRIPMIFSLVVLSPHGFFGQAGVFGKPDTGGQVVYILDQVKALEHELKSRLDEKGLDITPKILVVTRLIPEAEGTNCDMEEELIRGTDNCHIVRVPFRDESGEVVRQWISRFRIWPYLERFSTEAQNIILSKLQGNPDLIIGNYSDGNLVASLIAQRLGVTQCTIAHALEKTKYLYSDLYWQDNNDKYHFACQYTADLISMNYSDFIITSTYQEIAGTNDSVGQYESYMNYTLPGLYRVVNGIDVFDPKFNVVSPGAAPDIFFSYKSKDRFPEHIEEIESILFEDNLEGSRGSLADPDKPLIFTMARLDKIKNLTGLVRWFGENEELRKTANLLVIGGFVDESLSSDDEEREQIRIMHSVIDELGLDGSVRWVGAHLGKRMTGEFYRYVADRKGVFVQPALFEAFGLTIIEAMSSGLPVFATVYGGPSEIIEDGKSGFTLDPNKGDECAEKLLEFIQKCQSDPGHWIKISDNALKRVEERYNWPLYAKRLMTFARVYGFWKFVTNLEREETVRYLEMLYGMVYRRLADPKEY</sequence>
<gene>
    <name type="ordered locus">Dacet_2944</name>
</gene>
<feature type="chain" id="PRO_0000442256" description="Sucrose synthase">
    <location>
        <begin position="1"/>
        <end position="786"/>
    </location>
</feature>
<feature type="region of interest" description="GT-B glycosyltransferase" evidence="2">
    <location>
        <begin position="259"/>
        <end position="736"/>
    </location>
</feature>
<evidence type="ECO:0000250" key="1">
    <source>
        <dbReference type="UniProtKB" id="A0A059ZV61"/>
    </source>
</evidence>
<evidence type="ECO:0000250" key="2">
    <source>
        <dbReference type="UniProtKB" id="P49040"/>
    </source>
</evidence>
<evidence type="ECO:0000250" key="3">
    <source>
        <dbReference type="UniProtKB" id="Q820M5"/>
    </source>
</evidence>
<evidence type="ECO:0000269" key="4">
    <source>
    </source>
</evidence>
<evidence type="ECO:0000303" key="5">
    <source>
    </source>
</evidence>
<evidence type="ECO:0000305" key="6"/>
<comment type="function">
    <text evidence="1 4">Catalyzes the reversible conversion of sucrose and a nucleotide disphosphate (NDP) into fructose and NDP-glucose; although the reaction is freely reversible in vitro, the physiological reaction seems to be sucrose cleavage. Unlike characterized plant enzymes prefers ADP as a cosubstrate, whereas plants prefer UDP (By similarity). Its preference for ADP over UDP suggests it may directly link sucrose and glycogen metabolism (Probable).</text>
</comment>
<comment type="catalytic activity">
    <reaction evidence="4">
        <text>an NDP-alpha-D-glucose + D-fructose = a ribonucleoside 5'-diphosphate + sucrose + H(+)</text>
        <dbReference type="Rhea" id="RHEA:16241"/>
        <dbReference type="ChEBI" id="CHEBI:15378"/>
        <dbReference type="ChEBI" id="CHEBI:17992"/>
        <dbReference type="ChEBI" id="CHEBI:37721"/>
        <dbReference type="ChEBI" id="CHEBI:57930"/>
        <dbReference type="ChEBI" id="CHEBI:76533"/>
        <dbReference type="EC" id="2.4.1.13"/>
    </reaction>
</comment>
<comment type="biophysicochemical properties">
    <phDependence>
        <text evidence="4">Optimum pH is 6.0.</text>
    </phDependence>
    <temperatureDependence>
        <text evidence="4">Optimum temperature is 65 degrees Celsius. Very thermounstable, complete loss of activity after 15 minutes at 60 degrees Celsius.</text>
    </temperatureDependence>
</comment>
<comment type="subunit">
    <text evidence="3">Homotetramer.</text>
</comment>
<comment type="similarity">
    <text evidence="6">Belongs to the glycosyltransferase 1 family.</text>
</comment>
<dbReference type="EC" id="2.4.1.13" evidence="4"/>
<dbReference type="EMBL" id="CP001968">
    <property type="protein sequence ID" value="ADD69694.1"/>
    <property type="molecule type" value="Genomic_DNA"/>
</dbReference>
<dbReference type="RefSeq" id="WP_013012179.1">
    <property type="nucleotide sequence ID" value="NC_013943.1"/>
</dbReference>
<dbReference type="SMR" id="D4H6M0"/>
<dbReference type="STRING" id="522772.Dacet_2944"/>
<dbReference type="CAZy" id="GT4">
    <property type="family name" value="Glycosyltransferase Family 4"/>
</dbReference>
<dbReference type="PaxDb" id="522772-Dacet_2944"/>
<dbReference type="KEGG" id="dap:Dacet_2944"/>
<dbReference type="eggNOG" id="COG0438">
    <property type="taxonomic scope" value="Bacteria"/>
</dbReference>
<dbReference type="HOGENOM" id="CLU_019158_1_0_0"/>
<dbReference type="InParanoid" id="D4H6M0"/>
<dbReference type="OrthoDB" id="9775208at2"/>
<dbReference type="BRENDA" id="2.4.1.13">
    <property type="organism ID" value="14462"/>
</dbReference>
<dbReference type="Proteomes" id="UP000002012">
    <property type="component" value="Chromosome"/>
</dbReference>
<dbReference type="GO" id="GO:0016157">
    <property type="term" value="F:sucrose synthase activity"/>
    <property type="evidence" value="ECO:0007669"/>
    <property type="project" value="UniProtKB-EC"/>
</dbReference>
<dbReference type="GO" id="GO:0005985">
    <property type="term" value="P:sucrose metabolic process"/>
    <property type="evidence" value="ECO:0007669"/>
    <property type="project" value="InterPro"/>
</dbReference>
<dbReference type="Gene3D" id="1.20.120.1230">
    <property type="match status" value="1"/>
</dbReference>
<dbReference type="Gene3D" id="3.10.450.330">
    <property type="match status" value="1"/>
</dbReference>
<dbReference type="Gene3D" id="3.40.50.2000">
    <property type="entry name" value="Glycogen Phosphorylase B"/>
    <property type="match status" value="2"/>
</dbReference>
<dbReference type="InterPro" id="IPR001296">
    <property type="entry name" value="Glyco_trans_1"/>
</dbReference>
<dbReference type="InterPro" id="IPR000368">
    <property type="entry name" value="Sucrose_synth_GT-B1"/>
</dbReference>
<dbReference type="InterPro" id="IPR012820">
    <property type="entry name" value="Sucrose_synthase_pln/cyn"/>
</dbReference>
<dbReference type="InterPro" id="IPR056736">
    <property type="entry name" value="SUS_EPBD"/>
</dbReference>
<dbReference type="InterPro" id="IPR056735">
    <property type="entry name" value="SUS_N"/>
</dbReference>
<dbReference type="NCBIfam" id="TIGR02470">
    <property type="entry name" value="sucr_synth"/>
    <property type="match status" value="1"/>
</dbReference>
<dbReference type="PANTHER" id="PTHR45839">
    <property type="match status" value="1"/>
</dbReference>
<dbReference type="PANTHER" id="PTHR45839:SF7">
    <property type="entry name" value="SUCROSE SYNTHASE 1"/>
    <property type="match status" value="1"/>
</dbReference>
<dbReference type="Pfam" id="PF00534">
    <property type="entry name" value="Glycos_transf_1"/>
    <property type="match status" value="1"/>
</dbReference>
<dbReference type="Pfam" id="PF00862">
    <property type="entry name" value="GT-B_Sucrose_synth"/>
    <property type="match status" value="1"/>
</dbReference>
<dbReference type="Pfam" id="PF24862">
    <property type="entry name" value="SUS_EPBD"/>
    <property type="match status" value="1"/>
</dbReference>
<dbReference type="Pfam" id="PF24861">
    <property type="entry name" value="SUS_N"/>
    <property type="match status" value="1"/>
</dbReference>
<dbReference type="SUPFAM" id="SSF53756">
    <property type="entry name" value="UDP-Glycosyltransferase/glycogen phosphorylase"/>
    <property type="match status" value="1"/>
</dbReference>
<protein>
    <recommendedName>
        <fullName>Sucrose synthase</fullName>
        <shortName evidence="5">SuSyDa</shortName>
        <ecNumber evidence="4">2.4.1.13</ecNumber>
    </recommendedName>
</protein>